<reference evidence="3" key="1">
    <citation type="journal article" date="1999" name="Nature">
        <title>Sequence and analysis of chromosome 4 of the plant Arabidopsis thaliana.</title>
        <authorList>
            <person name="Mayer K.F.X."/>
            <person name="Schueller C."/>
            <person name="Wambutt R."/>
            <person name="Murphy G."/>
            <person name="Volckaert G."/>
            <person name="Pohl T."/>
            <person name="Duesterhoeft A."/>
            <person name="Stiekema W."/>
            <person name="Entian K.-D."/>
            <person name="Terryn N."/>
            <person name="Harris B."/>
            <person name="Ansorge W."/>
            <person name="Brandt P."/>
            <person name="Grivell L.A."/>
            <person name="Rieger M."/>
            <person name="Weichselgartner M."/>
            <person name="de Simone V."/>
            <person name="Obermaier B."/>
            <person name="Mache R."/>
            <person name="Mueller M."/>
            <person name="Kreis M."/>
            <person name="Delseny M."/>
            <person name="Puigdomenech P."/>
            <person name="Watson M."/>
            <person name="Schmidtheini T."/>
            <person name="Reichert B."/>
            <person name="Portetelle D."/>
            <person name="Perez-Alonso M."/>
            <person name="Boutry M."/>
            <person name="Bancroft I."/>
            <person name="Vos P."/>
            <person name="Hoheisel J."/>
            <person name="Zimmermann W."/>
            <person name="Wedler H."/>
            <person name="Ridley P."/>
            <person name="Langham S.-A."/>
            <person name="McCullagh B."/>
            <person name="Bilham L."/>
            <person name="Robben J."/>
            <person name="van der Schueren J."/>
            <person name="Grymonprez B."/>
            <person name="Chuang Y.-J."/>
            <person name="Vandenbussche F."/>
            <person name="Braeken M."/>
            <person name="Weltjens I."/>
            <person name="Voet M."/>
            <person name="Bastiaens I."/>
            <person name="Aert R."/>
            <person name="Defoor E."/>
            <person name="Weitzenegger T."/>
            <person name="Bothe G."/>
            <person name="Ramsperger U."/>
            <person name="Hilbert H."/>
            <person name="Braun M."/>
            <person name="Holzer E."/>
            <person name="Brandt A."/>
            <person name="Peters S."/>
            <person name="van Staveren M."/>
            <person name="Dirkse W."/>
            <person name="Mooijman P."/>
            <person name="Klein Lankhorst R."/>
            <person name="Rose M."/>
            <person name="Hauf J."/>
            <person name="Koetter P."/>
            <person name="Berneiser S."/>
            <person name="Hempel S."/>
            <person name="Feldpausch M."/>
            <person name="Lamberth S."/>
            <person name="Van den Daele H."/>
            <person name="De Keyser A."/>
            <person name="Buysshaert C."/>
            <person name="Gielen J."/>
            <person name="Villarroel R."/>
            <person name="De Clercq R."/>
            <person name="van Montagu M."/>
            <person name="Rogers J."/>
            <person name="Cronin A."/>
            <person name="Quail M.A."/>
            <person name="Bray-Allen S."/>
            <person name="Clark L."/>
            <person name="Doggett J."/>
            <person name="Hall S."/>
            <person name="Kay M."/>
            <person name="Lennard N."/>
            <person name="McLay K."/>
            <person name="Mayes R."/>
            <person name="Pettett A."/>
            <person name="Rajandream M.A."/>
            <person name="Lyne M."/>
            <person name="Benes V."/>
            <person name="Rechmann S."/>
            <person name="Borkova D."/>
            <person name="Bloecker H."/>
            <person name="Scharfe M."/>
            <person name="Grimm M."/>
            <person name="Loehnert T.-H."/>
            <person name="Dose S."/>
            <person name="de Haan M."/>
            <person name="Maarse A.C."/>
            <person name="Schaefer M."/>
            <person name="Mueller-Auer S."/>
            <person name="Gabel C."/>
            <person name="Fuchs M."/>
            <person name="Fartmann B."/>
            <person name="Granderath K."/>
            <person name="Dauner D."/>
            <person name="Herzl A."/>
            <person name="Neumann S."/>
            <person name="Argiriou A."/>
            <person name="Vitale D."/>
            <person name="Liguori R."/>
            <person name="Piravandi E."/>
            <person name="Massenet O."/>
            <person name="Quigley F."/>
            <person name="Clabauld G."/>
            <person name="Muendlein A."/>
            <person name="Felber R."/>
            <person name="Schnabl S."/>
            <person name="Hiller R."/>
            <person name="Schmidt W."/>
            <person name="Lecharny A."/>
            <person name="Aubourg S."/>
            <person name="Chefdor F."/>
            <person name="Cooke R."/>
            <person name="Berger C."/>
            <person name="Monfort A."/>
            <person name="Casacuberta E."/>
            <person name="Gibbons T."/>
            <person name="Weber N."/>
            <person name="Vandenbol M."/>
            <person name="Bargues M."/>
            <person name="Terol J."/>
            <person name="Torres A."/>
            <person name="Perez-Perez A."/>
            <person name="Purnelle B."/>
            <person name="Bent E."/>
            <person name="Johnson S."/>
            <person name="Tacon D."/>
            <person name="Jesse T."/>
            <person name="Heijnen L."/>
            <person name="Schwarz S."/>
            <person name="Scholler P."/>
            <person name="Heber S."/>
            <person name="Francs P."/>
            <person name="Bielke C."/>
            <person name="Frishman D."/>
            <person name="Haase D."/>
            <person name="Lemcke K."/>
            <person name="Mewes H.-W."/>
            <person name="Stocker S."/>
            <person name="Zaccaria P."/>
            <person name="Bevan M."/>
            <person name="Wilson R.K."/>
            <person name="de la Bastide M."/>
            <person name="Habermann K."/>
            <person name="Parnell L."/>
            <person name="Dedhia N."/>
            <person name="Gnoj L."/>
            <person name="Schutz K."/>
            <person name="Huang E."/>
            <person name="Spiegel L."/>
            <person name="Sekhon M."/>
            <person name="Murray J."/>
            <person name="Sheet P."/>
            <person name="Cordes M."/>
            <person name="Abu-Threideh J."/>
            <person name="Stoneking T."/>
            <person name="Kalicki J."/>
            <person name="Graves T."/>
            <person name="Harmon G."/>
            <person name="Edwards J."/>
            <person name="Latreille P."/>
            <person name="Courtney L."/>
            <person name="Cloud J."/>
            <person name="Abbott A."/>
            <person name="Scott K."/>
            <person name="Johnson D."/>
            <person name="Minx P."/>
            <person name="Bentley D."/>
            <person name="Fulton B."/>
            <person name="Miller N."/>
            <person name="Greco T."/>
            <person name="Kemp K."/>
            <person name="Kramer J."/>
            <person name="Fulton L."/>
            <person name="Mardis E."/>
            <person name="Dante M."/>
            <person name="Pepin K."/>
            <person name="Hillier L.W."/>
            <person name="Nelson J."/>
            <person name="Spieth J."/>
            <person name="Ryan E."/>
            <person name="Andrews S."/>
            <person name="Geisel C."/>
            <person name="Layman D."/>
            <person name="Du H."/>
            <person name="Ali J."/>
            <person name="Berghoff A."/>
            <person name="Jones K."/>
            <person name="Drone K."/>
            <person name="Cotton M."/>
            <person name="Joshu C."/>
            <person name="Antonoiu B."/>
            <person name="Zidanic M."/>
            <person name="Strong C."/>
            <person name="Sun H."/>
            <person name="Lamar B."/>
            <person name="Yordan C."/>
            <person name="Ma P."/>
            <person name="Zhong J."/>
            <person name="Preston R."/>
            <person name="Vil D."/>
            <person name="Shekher M."/>
            <person name="Matero A."/>
            <person name="Shah R."/>
            <person name="Swaby I.K."/>
            <person name="O'Shaughnessy A."/>
            <person name="Rodriguez M."/>
            <person name="Hoffman J."/>
            <person name="Till S."/>
            <person name="Granat S."/>
            <person name="Shohdy N."/>
            <person name="Hasegawa A."/>
            <person name="Hameed A."/>
            <person name="Lodhi M."/>
            <person name="Johnson A."/>
            <person name="Chen E."/>
            <person name="Marra M.A."/>
            <person name="Martienssen R."/>
            <person name="McCombie W.R."/>
        </authorList>
    </citation>
    <scope>NUCLEOTIDE SEQUENCE [LARGE SCALE GENOMIC DNA]</scope>
    <source>
        <strain>cv. Columbia</strain>
    </source>
</reference>
<reference key="2">
    <citation type="journal article" date="2017" name="Plant J.">
        <title>Araport11: a complete reannotation of the Arabidopsis thaliana reference genome.</title>
        <authorList>
            <person name="Cheng C.Y."/>
            <person name="Krishnakumar V."/>
            <person name="Chan A.P."/>
            <person name="Thibaud-Nissen F."/>
            <person name="Schobel S."/>
            <person name="Town C.D."/>
        </authorList>
    </citation>
    <scope>GENOME REANNOTATION</scope>
    <source>
        <strain>cv. Columbia</strain>
    </source>
</reference>
<reference evidence="3" key="3">
    <citation type="journal article" date="2001" name="Plant Mol. Biol.">
        <title>Two large Arabidopsis thaliana gene families are homologous to the Brassica gene superfamily that encodes pollen coat proteins and the male component of the self-incompatibility response.</title>
        <authorList>
            <person name="Vanoosthuyse V."/>
            <person name="Miege C."/>
            <person name="Dumas C."/>
            <person name="Cock J.M."/>
        </authorList>
    </citation>
    <scope>IDENTIFICATION</scope>
</reference>
<reference key="4">
    <citation type="journal article" date="2005" name="Plant Physiol.">
        <title>Genome organization of more than 300 defensin-like genes in Arabidopsis.</title>
        <authorList>
            <person name="Silverstein K.A.T."/>
            <person name="Graham M.A."/>
            <person name="Paape T.D."/>
            <person name="VandenBosch K.A."/>
        </authorList>
    </citation>
    <scope>GENE FAMILY</scope>
</reference>
<feature type="signal peptide" evidence="2">
    <location>
        <begin position="1"/>
        <end position="27"/>
    </location>
</feature>
<feature type="chain" id="PRO_0000017276" description="Putative defensin-like protein 162">
    <location>
        <begin position="28"/>
        <end position="77"/>
    </location>
</feature>
<feature type="disulfide bond" evidence="1">
    <location>
        <begin position="34"/>
        <end position="77"/>
    </location>
</feature>
<feature type="disulfide bond" evidence="1">
    <location>
        <begin position="44"/>
        <end position="63"/>
    </location>
</feature>
<feature type="disulfide bond" evidence="1">
    <location>
        <begin position="49"/>
        <end position="71"/>
    </location>
</feature>
<feature type="disulfide bond" evidence="1">
    <location>
        <begin position="53"/>
        <end position="73"/>
    </location>
</feature>
<organism evidence="3">
    <name type="scientific">Arabidopsis thaliana</name>
    <name type="common">Mouse-ear cress</name>
    <dbReference type="NCBI Taxonomy" id="3702"/>
    <lineage>
        <taxon>Eukaryota</taxon>
        <taxon>Viridiplantae</taxon>
        <taxon>Streptophyta</taxon>
        <taxon>Embryophyta</taxon>
        <taxon>Tracheophyta</taxon>
        <taxon>Spermatophyta</taxon>
        <taxon>Magnoliopsida</taxon>
        <taxon>eudicotyledons</taxon>
        <taxon>Gunneridae</taxon>
        <taxon>Pentapetalae</taxon>
        <taxon>rosids</taxon>
        <taxon>malvids</taxon>
        <taxon>Brassicales</taxon>
        <taxon>Brassicaceae</taxon>
        <taxon>Camelineae</taxon>
        <taxon>Arabidopsis</taxon>
    </lineage>
</organism>
<comment type="subcellular location">
    <subcellularLocation>
        <location evidence="1">Secreted</location>
    </subcellularLocation>
</comment>
<comment type="similarity">
    <text evidence="3">Belongs to the DEFL family.</text>
</comment>
<gene>
    <name type="primary">LCR37</name>
    <name type="ordered locus">At4g13095</name>
    <name type="ORF">F25G13</name>
</gene>
<keyword id="KW-0929">Antimicrobial</keyword>
<keyword id="KW-1015">Disulfide bond</keyword>
<keyword id="KW-0295">Fungicide</keyword>
<keyword id="KW-0611">Plant defense</keyword>
<keyword id="KW-1185">Reference proteome</keyword>
<keyword id="KW-0964">Secreted</keyword>
<keyword id="KW-0732">Signal</keyword>
<dbReference type="EMBL" id="AL079349">
    <property type="status" value="NOT_ANNOTATED_CDS"/>
    <property type="molecule type" value="Genomic_DNA"/>
</dbReference>
<dbReference type="EMBL" id="AL161535">
    <property type="status" value="NOT_ANNOTATED_CDS"/>
    <property type="molecule type" value="Genomic_DNA"/>
</dbReference>
<dbReference type="EMBL" id="CP002687">
    <property type="protein sequence ID" value="AEE83230.1"/>
    <property type="molecule type" value="Genomic_DNA"/>
</dbReference>
<dbReference type="RefSeq" id="NP_001031623.1">
    <property type="nucleotide sequence ID" value="NM_001036546.2"/>
</dbReference>
<dbReference type="SMR" id="P82752"/>
<dbReference type="STRING" id="3702.P82752"/>
<dbReference type="PaxDb" id="3702-AT4G13095.1"/>
<dbReference type="ProteomicsDB" id="224264"/>
<dbReference type="EnsemblPlants" id="AT4G13095.1">
    <property type="protein sequence ID" value="AT4G13095.1"/>
    <property type="gene ID" value="AT4G13095"/>
</dbReference>
<dbReference type="GeneID" id="3770153"/>
<dbReference type="Gramene" id="AT4G13095.1">
    <property type="protein sequence ID" value="AT4G13095.1"/>
    <property type="gene ID" value="AT4G13095"/>
</dbReference>
<dbReference type="KEGG" id="ath:AT4G13095"/>
<dbReference type="Araport" id="AT4G13095"/>
<dbReference type="TAIR" id="AT4G13095">
    <property type="gene designation" value="LCR37"/>
</dbReference>
<dbReference type="HOGENOM" id="CLU_182511_1_1_1"/>
<dbReference type="InParanoid" id="P82752"/>
<dbReference type="OMA" id="NCKCKYN"/>
<dbReference type="PhylomeDB" id="P82752"/>
<dbReference type="PRO" id="PR:P82752"/>
<dbReference type="Proteomes" id="UP000006548">
    <property type="component" value="Chromosome 4"/>
</dbReference>
<dbReference type="ExpressionAtlas" id="P82752">
    <property type="expression patterns" value="baseline and differential"/>
</dbReference>
<dbReference type="GO" id="GO:0005576">
    <property type="term" value="C:extracellular region"/>
    <property type="evidence" value="ECO:0007669"/>
    <property type="project" value="UniProtKB-SubCell"/>
</dbReference>
<dbReference type="GO" id="GO:0050832">
    <property type="term" value="P:defense response to fungus"/>
    <property type="evidence" value="ECO:0007669"/>
    <property type="project" value="UniProtKB-KW"/>
</dbReference>
<dbReference type="GO" id="GO:0031640">
    <property type="term" value="P:killing of cells of another organism"/>
    <property type="evidence" value="ECO:0007669"/>
    <property type="project" value="UniProtKB-KW"/>
</dbReference>
<dbReference type="InterPro" id="IPR010851">
    <property type="entry name" value="DEFL"/>
</dbReference>
<dbReference type="PANTHER" id="PTHR33830:SF11">
    <property type="entry name" value="DEFENSIN-LIKE PROTEIN 163-RELATED"/>
    <property type="match status" value="1"/>
</dbReference>
<dbReference type="PANTHER" id="PTHR33830">
    <property type="entry name" value="DEFENSIN-LIKE PROTEIN 184-RELATED"/>
    <property type="match status" value="1"/>
</dbReference>
<dbReference type="Pfam" id="PF07333">
    <property type="entry name" value="SLR1-BP"/>
    <property type="match status" value="1"/>
</dbReference>
<name>DF162_ARATH</name>
<evidence type="ECO:0000250" key="1"/>
<evidence type="ECO:0000255" key="2"/>
<evidence type="ECO:0000305" key="3"/>
<accession>P82752</accession>
<proteinExistence type="inferred from homology"/>
<protein>
    <recommendedName>
        <fullName>Putative defensin-like protein 162</fullName>
    </recommendedName>
    <alternativeName>
        <fullName>Putative low-molecular-weight cysteine-rich protein 37</fullName>
        <shortName>Protein LCR37</shortName>
    </alternativeName>
</protein>
<sequence length="77" mass="8366">MAKQLCSYMFISMFILSAFLALPSAEGGATIKKCVVDVKLSKPCTFQECQPLCLQKYNGNGLCPGDDNNICACVYNC</sequence>